<protein>
    <recommendedName>
        <fullName>Metallocarboxypeptidase A</fullName>
        <shortName>MCPA</shortName>
        <ecNumber>3.4.17.-</ecNumber>
    </recommendedName>
    <alternativeName>
        <fullName>Carboxypeptidase M14A</fullName>
    </alternativeName>
</protein>
<gene>
    <name type="primary">MCPA</name>
</gene>
<organism>
    <name type="scientific">Trichophyton rubrum</name>
    <name type="common">Athlete's foot fungus</name>
    <name type="synonym">Epidermophyton rubrum</name>
    <dbReference type="NCBI Taxonomy" id="5551"/>
    <lineage>
        <taxon>Eukaryota</taxon>
        <taxon>Fungi</taxon>
        <taxon>Dikarya</taxon>
        <taxon>Ascomycota</taxon>
        <taxon>Pezizomycotina</taxon>
        <taxon>Eurotiomycetes</taxon>
        <taxon>Eurotiomycetidae</taxon>
        <taxon>Onygenales</taxon>
        <taxon>Arthrodermataceae</taxon>
        <taxon>Trichophyton</taxon>
    </lineage>
</organism>
<comment type="function">
    <text evidence="4">Extracellular metalloprotease that contributes to pathogenicity.</text>
</comment>
<comment type="cofactor">
    <cofactor evidence="1">
        <name>Zn(2+)</name>
        <dbReference type="ChEBI" id="CHEBI:29105"/>
    </cofactor>
    <text evidence="1">Binds 1 zinc ion per subunit.</text>
</comment>
<comment type="biophysicochemical properties">
    <phDependence>
        <text>Optimum pH is 7.5.</text>
    </phDependence>
</comment>
<comment type="subcellular location">
    <subcellularLocation>
        <location evidence="4">Secreted</location>
    </subcellularLocation>
</comment>
<comment type="induction">
    <text evidence="5">Expression is strongly increased during growth on protein-rich medium. Expressed at even higher levels when keratin is present in the protein-rich medium.</text>
</comment>
<comment type="similarity">
    <text evidence="6">Belongs to the peptidase M14 family.</text>
</comment>
<proteinExistence type="evidence at protein level"/>
<dbReference type="EC" id="3.4.17.-"/>
<dbReference type="EMBL" id="EU024297">
    <property type="protein sequence ID" value="ABW79919.1"/>
    <property type="molecule type" value="Genomic_DNA"/>
</dbReference>
<dbReference type="EMBL" id="DQ778058">
    <property type="protein sequence ID" value="ABG67896.1"/>
    <property type="molecule type" value="mRNA"/>
</dbReference>
<dbReference type="SMR" id="A6XGK3"/>
<dbReference type="MEROPS" id="M14.014"/>
<dbReference type="VEuPathDB" id="FungiDB:TERG_04176"/>
<dbReference type="OMA" id="PPNHKDL"/>
<dbReference type="GO" id="GO:0005576">
    <property type="term" value="C:extracellular region"/>
    <property type="evidence" value="ECO:0007669"/>
    <property type="project" value="UniProtKB-SubCell"/>
</dbReference>
<dbReference type="GO" id="GO:0004181">
    <property type="term" value="F:metallocarboxypeptidase activity"/>
    <property type="evidence" value="ECO:0007669"/>
    <property type="project" value="InterPro"/>
</dbReference>
<dbReference type="GO" id="GO:0008270">
    <property type="term" value="F:zinc ion binding"/>
    <property type="evidence" value="ECO:0007669"/>
    <property type="project" value="InterPro"/>
</dbReference>
<dbReference type="GO" id="GO:0006508">
    <property type="term" value="P:proteolysis"/>
    <property type="evidence" value="ECO:0007669"/>
    <property type="project" value="UniProtKB-KW"/>
</dbReference>
<dbReference type="CDD" id="cd03860">
    <property type="entry name" value="M14_CP_A-B_like"/>
    <property type="match status" value="1"/>
</dbReference>
<dbReference type="FunFam" id="3.40.630.10:FF:000040">
    <property type="entry name" value="zinc carboxypeptidase"/>
    <property type="match status" value="1"/>
</dbReference>
<dbReference type="Gene3D" id="3.30.70.340">
    <property type="entry name" value="Metallocarboxypeptidase-like"/>
    <property type="match status" value="1"/>
</dbReference>
<dbReference type="Gene3D" id="3.40.630.10">
    <property type="entry name" value="Zn peptidases"/>
    <property type="match status" value="1"/>
</dbReference>
<dbReference type="InterPro" id="IPR036990">
    <property type="entry name" value="M14A-like_propep"/>
</dbReference>
<dbReference type="InterPro" id="IPR003146">
    <property type="entry name" value="M14A_act_pep"/>
</dbReference>
<dbReference type="InterPro" id="IPR000834">
    <property type="entry name" value="Peptidase_M14"/>
</dbReference>
<dbReference type="PANTHER" id="PTHR11705">
    <property type="entry name" value="PROTEASE FAMILY M14 CARBOXYPEPTIDASE A,B"/>
    <property type="match status" value="1"/>
</dbReference>
<dbReference type="PANTHER" id="PTHR11705:SF143">
    <property type="entry name" value="SLL0236 PROTEIN"/>
    <property type="match status" value="1"/>
</dbReference>
<dbReference type="Pfam" id="PF00246">
    <property type="entry name" value="Peptidase_M14"/>
    <property type="match status" value="1"/>
</dbReference>
<dbReference type="Pfam" id="PF02244">
    <property type="entry name" value="Propep_M14"/>
    <property type="match status" value="1"/>
</dbReference>
<dbReference type="PRINTS" id="PR00765">
    <property type="entry name" value="CRBOXYPTASEA"/>
</dbReference>
<dbReference type="SMART" id="SM00631">
    <property type="entry name" value="Zn_pept"/>
    <property type="match status" value="1"/>
</dbReference>
<dbReference type="SUPFAM" id="SSF54897">
    <property type="entry name" value="Protease propeptides/inhibitors"/>
    <property type="match status" value="1"/>
</dbReference>
<dbReference type="SUPFAM" id="SSF53187">
    <property type="entry name" value="Zn-dependent exopeptidases"/>
    <property type="match status" value="1"/>
</dbReference>
<dbReference type="PROSITE" id="PS00132">
    <property type="entry name" value="CARBOXYPEPT_ZN_1"/>
    <property type="match status" value="1"/>
</dbReference>
<dbReference type="PROSITE" id="PS52035">
    <property type="entry name" value="PEPTIDASE_M14"/>
    <property type="match status" value="1"/>
</dbReference>
<accession>A6XGK3</accession>
<feature type="signal peptide" evidence="2">
    <location>
        <begin position="1"/>
        <end position="17"/>
    </location>
</feature>
<feature type="propeptide" id="PRO_0000384105" description="Activation peptide" evidence="1">
    <location>
        <begin position="18"/>
        <end position="112"/>
    </location>
</feature>
<feature type="chain" id="PRO_0000384106" description="Metallocarboxypeptidase A">
    <location>
        <begin position="113"/>
        <end position="422"/>
    </location>
</feature>
<feature type="domain" description="Peptidase M14" evidence="3">
    <location>
        <begin position="119"/>
        <end position="419"/>
    </location>
</feature>
<feature type="active site" description="Proton donor/acceptor" evidence="3">
    <location>
        <position position="385"/>
    </location>
</feature>
<feature type="binding site" evidence="1">
    <location>
        <begin position="179"/>
        <end position="182"/>
    </location>
    <ligand>
        <name>substrate</name>
    </ligand>
</feature>
<feature type="binding site" evidence="3">
    <location>
        <position position="179"/>
    </location>
    <ligand>
        <name>Zn(2+)</name>
        <dbReference type="ChEBI" id="CHEBI:29105"/>
        <note>catalytic</note>
    </ligand>
</feature>
<feature type="binding site" evidence="3">
    <location>
        <position position="182"/>
    </location>
    <ligand>
        <name>Zn(2+)</name>
        <dbReference type="ChEBI" id="CHEBI:29105"/>
        <note>catalytic</note>
    </ligand>
</feature>
<feature type="binding site" evidence="1">
    <location>
        <position position="237"/>
    </location>
    <ligand>
        <name>substrate</name>
    </ligand>
</feature>
<feature type="binding site" evidence="1">
    <location>
        <begin position="254"/>
        <end position="255"/>
    </location>
    <ligand>
        <name>substrate</name>
    </ligand>
</feature>
<feature type="binding site" evidence="3">
    <location>
        <position position="309"/>
    </location>
    <ligand>
        <name>Zn(2+)</name>
        <dbReference type="ChEBI" id="CHEBI:29105"/>
        <note>catalytic</note>
    </ligand>
</feature>
<feature type="binding site" evidence="1">
    <location>
        <begin position="310"/>
        <end position="311"/>
    </location>
    <ligand>
        <name>substrate</name>
    </ligand>
</feature>
<feature type="disulfide bond" evidence="1">
    <location>
        <begin position="248"/>
        <end position="271"/>
    </location>
</feature>
<keyword id="KW-0121">Carboxypeptidase</keyword>
<keyword id="KW-1015">Disulfide bond</keyword>
<keyword id="KW-0378">Hydrolase</keyword>
<keyword id="KW-0479">Metal-binding</keyword>
<keyword id="KW-0482">Metalloprotease</keyword>
<keyword id="KW-0645">Protease</keyword>
<keyword id="KW-0964">Secreted</keyword>
<keyword id="KW-0732">Signal</keyword>
<keyword id="KW-0843">Virulence</keyword>
<keyword id="KW-0862">Zinc</keyword>
<keyword id="KW-0865">Zymogen</keyword>
<name>MCPA_TRIRU</name>
<evidence type="ECO:0000250" key="1"/>
<evidence type="ECO:0000255" key="2"/>
<evidence type="ECO:0000255" key="3">
    <source>
        <dbReference type="PROSITE-ProRule" id="PRU01379"/>
    </source>
</evidence>
<evidence type="ECO:0000269" key="4">
    <source>
    </source>
</evidence>
<evidence type="ECO:0000269" key="5">
    <source>
    </source>
</evidence>
<evidence type="ECO:0000305" key="6"/>
<sequence length="422" mass="47106">MRSVLSLALLAANVVTAAVVSPFDYSGYKVIRVPTQKDNVKEVQRVITDLNLDTWKYPKSEGQNADIVVPPSQISSFMERISGMNIEMMHEDLGLSIRNETSFEAYSAGYAPDINWFKSYHSYQDHLSYLQDLQGLFRTRSEYVDAGKSHEGRTIPALHIWGSGGKNSKPAIIFHGTIHAREWITTMVTEYMAWSFLSQYNKNADITSIVDNFDIWIFPIVNPDGFAFTQTSNRLWRKNRQPNPNARCPGRDLNRNYPYQWVGPGSSSNPCSDTYRGAQPGDGTEIKVHIANMKKIAANKGIAMFVDWHSYGQLFMSPYGYSCTARPPTDARHQELSRIFAQALKAVHGTPYKTGPICNTIYQVNGDSVDYALEVLKVKLSLTAELRDTGARGFVLPADQIIPSGEETLAGTVAMLKAVIQG</sequence>
<reference key="1">
    <citation type="journal article" date="2008" name="Int. J. Med. Microbiol.">
        <title>Trichophyton rubrum secreted and membrane-associated carboxypeptidases.</title>
        <authorList>
            <person name="Zaugg C."/>
            <person name="Jousson O."/>
            <person name="Lechenne B."/>
            <person name="Staib P."/>
            <person name="Monod M."/>
        </authorList>
    </citation>
    <scope>NUCLEOTIDE SEQUENCE [GENOMIC DNA / MRNA]</scope>
    <scope>SUBCELLULAR LOCATION</scope>
    <scope>FUNCTION</scope>
</reference>
<reference key="2">
    <citation type="journal article" date="2009" name="Eukaryot. Cell">
        <title>Gene expression profiling in the human pathogenic dermatophyte Trichophyton rubrum during growth on proteins.</title>
        <authorList>
            <person name="Zaugg C."/>
            <person name="Monod M."/>
            <person name="Weber J."/>
            <person name="Harshman K."/>
            <person name="Pradervand S."/>
            <person name="Thomas J."/>
            <person name="Bueno M."/>
            <person name="Giddey K."/>
            <person name="Staib P."/>
        </authorList>
    </citation>
    <scope>INDUCTION</scope>
</reference>